<dbReference type="EMBL" id="CP001339">
    <property type="protein sequence ID" value="ACL73389.1"/>
    <property type="molecule type" value="Genomic_DNA"/>
</dbReference>
<dbReference type="RefSeq" id="WP_012638865.1">
    <property type="nucleotide sequence ID" value="NC_011901.1"/>
</dbReference>
<dbReference type="SMR" id="B8GV43"/>
<dbReference type="STRING" id="396588.Tgr7_2309"/>
<dbReference type="KEGG" id="tgr:Tgr7_2309"/>
<dbReference type="eggNOG" id="COG0097">
    <property type="taxonomic scope" value="Bacteria"/>
</dbReference>
<dbReference type="HOGENOM" id="CLU_065464_1_2_6"/>
<dbReference type="OrthoDB" id="9805007at2"/>
<dbReference type="Proteomes" id="UP000002383">
    <property type="component" value="Chromosome"/>
</dbReference>
<dbReference type="GO" id="GO:0022625">
    <property type="term" value="C:cytosolic large ribosomal subunit"/>
    <property type="evidence" value="ECO:0007669"/>
    <property type="project" value="TreeGrafter"/>
</dbReference>
<dbReference type="GO" id="GO:0019843">
    <property type="term" value="F:rRNA binding"/>
    <property type="evidence" value="ECO:0007669"/>
    <property type="project" value="UniProtKB-UniRule"/>
</dbReference>
<dbReference type="GO" id="GO:0003735">
    <property type="term" value="F:structural constituent of ribosome"/>
    <property type="evidence" value="ECO:0007669"/>
    <property type="project" value="InterPro"/>
</dbReference>
<dbReference type="GO" id="GO:0002181">
    <property type="term" value="P:cytoplasmic translation"/>
    <property type="evidence" value="ECO:0007669"/>
    <property type="project" value="TreeGrafter"/>
</dbReference>
<dbReference type="FunFam" id="3.90.930.12:FF:000001">
    <property type="entry name" value="50S ribosomal protein L6"/>
    <property type="match status" value="1"/>
</dbReference>
<dbReference type="FunFam" id="3.90.930.12:FF:000002">
    <property type="entry name" value="50S ribosomal protein L6"/>
    <property type="match status" value="1"/>
</dbReference>
<dbReference type="Gene3D" id="3.90.930.12">
    <property type="entry name" value="Ribosomal protein L6, alpha-beta domain"/>
    <property type="match status" value="2"/>
</dbReference>
<dbReference type="HAMAP" id="MF_01365_B">
    <property type="entry name" value="Ribosomal_uL6_B"/>
    <property type="match status" value="1"/>
</dbReference>
<dbReference type="InterPro" id="IPR000702">
    <property type="entry name" value="Ribosomal_uL6-like"/>
</dbReference>
<dbReference type="InterPro" id="IPR036789">
    <property type="entry name" value="Ribosomal_uL6-like_a/b-dom_sf"/>
</dbReference>
<dbReference type="InterPro" id="IPR020040">
    <property type="entry name" value="Ribosomal_uL6_a/b-dom"/>
</dbReference>
<dbReference type="InterPro" id="IPR019906">
    <property type="entry name" value="Ribosomal_uL6_bac-type"/>
</dbReference>
<dbReference type="InterPro" id="IPR002358">
    <property type="entry name" value="Ribosomal_uL6_CS"/>
</dbReference>
<dbReference type="NCBIfam" id="TIGR03654">
    <property type="entry name" value="L6_bact"/>
    <property type="match status" value="1"/>
</dbReference>
<dbReference type="PANTHER" id="PTHR11655">
    <property type="entry name" value="60S/50S RIBOSOMAL PROTEIN L6/L9"/>
    <property type="match status" value="1"/>
</dbReference>
<dbReference type="PANTHER" id="PTHR11655:SF14">
    <property type="entry name" value="LARGE RIBOSOMAL SUBUNIT PROTEIN UL6M"/>
    <property type="match status" value="1"/>
</dbReference>
<dbReference type="Pfam" id="PF00347">
    <property type="entry name" value="Ribosomal_L6"/>
    <property type="match status" value="2"/>
</dbReference>
<dbReference type="PIRSF" id="PIRSF002162">
    <property type="entry name" value="Ribosomal_L6"/>
    <property type="match status" value="1"/>
</dbReference>
<dbReference type="PRINTS" id="PR00059">
    <property type="entry name" value="RIBOSOMALL6"/>
</dbReference>
<dbReference type="SUPFAM" id="SSF56053">
    <property type="entry name" value="Ribosomal protein L6"/>
    <property type="match status" value="2"/>
</dbReference>
<dbReference type="PROSITE" id="PS00525">
    <property type="entry name" value="RIBOSOMAL_L6_1"/>
    <property type="match status" value="1"/>
</dbReference>
<proteinExistence type="inferred from homology"/>
<protein>
    <recommendedName>
        <fullName evidence="1">Large ribosomal subunit protein uL6</fullName>
    </recommendedName>
    <alternativeName>
        <fullName evidence="2">50S ribosomal protein L6</fullName>
    </alternativeName>
</protein>
<feature type="chain" id="PRO_1000166839" description="Large ribosomal subunit protein uL6">
    <location>
        <begin position="1"/>
        <end position="177"/>
    </location>
</feature>
<gene>
    <name evidence="1" type="primary">rplF</name>
    <name type="ordered locus">Tgr7_2309</name>
</gene>
<evidence type="ECO:0000255" key="1">
    <source>
        <dbReference type="HAMAP-Rule" id="MF_01365"/>
    </source>
</evidence>
<evidence type="ECO:0000305" key="2"/>
<name>RL6_THISH</name>
<sequence length="177" mass="19009">MSRVAKKPIALPSGVNVTINGNNVALKGPKGQLSYDLHADVEVSQEGNTLQLAPRNGDASKYAMAGTMRALVNNMVVGVSQGFERKLELVGVGYRAQAQGKTLNLTLGFSHPVAYPVPEGITIETPSQTEILVKGVDKQVVGQVAAEIRAFRPPEPYKGKGVKYANEQIIRKEAKKK</sequence>
<accession>B8GV43</accession>
<organism>
    <name type="scientific">Thioalkalivibrio sulfidiphilus (strain HL-EbGR7)</name>
    <dbReference type="NCBI Taxonomy" id="396588"/>
    <lineage>
        <taxon>Bacteria</taxon>
        <taxon>Pseudomonadati</taxon>
        <taxon>Pseudomonadota</taxon>
        <taxon>Gammaproteobacteria</taxon>
        <taxon>Chromatiales</taxon>
        <taxon>Ectothiorhodospiraceae</taxon>
        <taxon>Thioalkalivibrio</taxon>
    </lineage>
</organism>
<reference key="1">
    <citation type="journal article" date="2011" name="Stand. Genomic Sci.">
        <title>Complete genome sequence of 'Thioalkalivibrio sulfidophilus' HL-EbGr7.</title>
        <authorList>
            <person name="Muyzer G."/>
            <person name="Sorokin D.Y."/>
            <person name="Mavromatis K."/>
            <person name="Lapidus A."/>
            <person name="Clum A."/>
            <person name="Ivanova N."/>
            <person name="Pati A."/>
            <person name="d'Haeseleer P."/>
            <person name="Woyke T."/>
            <person name="Kyrpides N.C."/>
        </authorList>
    </citation>
    <scope>NUCLEOTIDE SEQUENCE [LARGE SCALE GENOMIC DNA]</scope>
    <source>
        <strain>HL-EbGR7</strain>
    </source>
</reference>
<keyword id="KW-1185">Reference proteome</keyword>
<keyword id="KW-0687">Ribonucleoprotein</keyword>
<keyword id="KW-0689">Ribosomal protein</keyword>
<keyword id="KW-0694">RNA-binding</keyword>
<keyword id="KW-0699">rRNA-binding</keyword>
<comment type="function">
    <text evidence="1">This protein binds to the 23S rRNA, and is important in its secondary structure. It is located near the subunit interface in the base of the L7/L12 stalk, and near the tRNA binding site of the peptidyltransferase center.</text>
</comment>
<comment type="subunit">
    <text evidence="1">Part of the 50S ribosomal subunit.</text>
</comment>
<comment type="similarity">
    <text evidence="1">Belongs to the universal ribosomal protein uL6 family.</text>
</comment>